<evidence type="ECO:0000250" key="1"/>
<evidence type="ECO:0000250" key="2">
    <source>
        <dbReference type="UniProtKB" id="P68431"/>
    </source>
</evidence>
<evidence type="ECO:0000250" key="3">
    <source>
        <dbReference type="UniProtKB" id="P68433"/>
    </source>
</evidence>
<evidence type="ECO:0000250" key="4">
    <source>
        <dbReference type="UniProtKB" id="P84243"/>
    </source>
</evidence>
<evidence type="ECO:0000250" key="5">
    <source>
        <dbReference type="UniProtKB" id="P84244"/>
    </source>
</evidence>
<evidence type="ECO:0000250" key="6">
    <source>
        <dbReference type="UniProtKB" id="P84245"/>
    </source>
</evidence>
<evidence type="ECO:0000250" key="7">
    <source>
        <dbReference type="UniProtKB" id="Q5E9F8"/>
    </source>
</evidence>
<evidence type="ECO:0000250" key="8">
    <source>
        <dbReference type="UniProtKB" id="Q71DI3"/>
    </source>
</evidence>
<evidence type="ECO:0000256" key="9">
    <source>
        <dbReference type="SAM" id="MobiDB-lite"/>
    </source>
</evidence>
<evidence type="ECO:0000305" key="10"/>
<feature type="initiator methionine" description="Removed" evidence="10">
    <location>
        <position position="1"/>
    </location>
</feature>
<feature type="chain" id="PRO_0000221255" description="Histone H3.3">
    <location>
        <begin position="2"/>
        <end position="136"/>
    </location>
</feature>
<feature type="region of interest" description="Disordered" evidence="9">
    <location>
        <begin position="1"/>
        <end position="43"/>
    </location>
</feature>
<feature type="site" description="Interaction with ZMYND11" evidence="4">
    <location>
        <position position="32"/>
    </location>
</feature>
<feature type="modified residue" description="Asymmetric dimethylarginine; by PRMT6; alternate" evidence="4">
    <location>
        <position position="3"/>
    </location>
</feature>
<feature type="modified residue" description="Citrulline; alternate" evidence="4">
    <location>
        <position position="3"/>
    </location>
</feature>
<feature type="modified residue" description="Phosphothreonine; by HASPIN and VRK1" evidence="4">
    <location>
        <position position="4"/>
    </location>
</feature>
<feature type="modified residue" description="Allysine; alternate" evidence="4">
    <location>
        <position position="5"/>
    </location>
</feature>
<feature type="modified residue" description="N6,N6,N6-trimethyllysine; alternate" evidence="4">
    <location>
        <position position="5"/>
    </location>
</feature>
<feature type="modified residue" description="N6,N6-dimethyllysine; alternate" evidence="4">
    <location>
        <position position="5"/>
    </location>
</feature>
<feature type="modified residue" description="N6-(2-hydroxyisobutyryl)lysine; alternate" evidence="2">
    <location>
        <position position="5"/>
    </location>
</feature>
<feature type="modified residue" description="N6-(beta-hydroxybutyryl)lysine; alternate" evidence="3">
    <location>
        <position position="5"/>
    </location>
</feature>
<feature type="modified residue" description="N6-acetyllysine; alternate" evidence="4">
    <location>
        <position position="5"/>
    </location>
</feature>
<feature type="modified residue" description="N6-crotonyllysine; alternate" evidence="4">
    <location>
        <position position="5"/>
    </location>
</feature>
<feature type="modified residue" description="N6-methyllysine; alternate" evidence="4">
    <location>
        <position position="5"/>
    </location>
</feature>
<feature type="modified residue" description="5-glutamyl dopamine; alternate" evidence="4">
    <location>
        <position position="6"/>
    </location>
</feature>
<feature type="modified residue" description="5-glutamyl serotonin; alternate" evidence="4">
    <location>
        <position position="6"/>
    </location>
</feature>
<feature type="modified residue" description="Phosphothreonine; by PKC" evidence="4">
    <location>
        <position position="7"/>
    </location>
</feature>
<feature type="modified residue" description="Citrulline; alternate" evidence="4">
    <location>
        <position position="9"/>
    </location>
</feature>
<feature type="modified residue" description="Symmetric dimethylarginine; by PRMT5; alternate" evidence="5">
    <location>
        <position position="9"/>
    </location>
</feature>
<feature type="modified residue" description="N6,N6,N6-trimethyllysine; alternate" evidence="4">
    <location>
        <position position="10"/>
    </location>
</feature>
<feature type="modified residue" description="N6,N6-dimethyllysine; alternate" evidence="4">
    <location>
        <position position="10"/>
    </location>
</feature>
<feature type="modified residue" description="N6-(2-hydroxyisobutyryl)lysine; alternate" evidence="2">
    <location>
        <position position="10"/>
    </location>
</feature>
<feature type="modified residue" description="N6-(beta-hydroxybutyryl)lysine; alternate" evidence="3">
    <location>
        <position position="10"/>
    </location>
</feature>
<feature type="modified residue" description="N6-acetyllysine; alternate" evidence="4">
    <location>
        <position position="10"/>
    </location>
</feature>
<feature type="modified residue" description="N6-crotonyllysine; alternate" evidence="4">
    <location>
        <position position="10"/>
    </location>
</feature>
<feature type="modified residue" description="N6-lactoyllysine; alternate" evidence="4">
    <location>
        <position position="10"/>
    </location>
</feature>
<feature type="modified residue" description="N6-methyllysine; alternate" evidence="4">
    <location>
        <position position="10"/>
    </location>
</feature>
<feature type="modified residue" description="ADP-ribosylserine; alternate" evidence="2">
    <location>
        <position position="11"/>
    </location>
</feature>
<feature type="modified residue" description="Phosphoserine; alternate; by AURKB, AURKC, RPS6KA3, RPS6KA4 and RPS6KA5" evidence="7">
    <location>
        <position position="11"/>
    </location>
</feature>
<feature type="modified residue" description="Phosphothreonine; by PKC" evidence="2">
    <location>
        <position position="12"/>
    </location>
</feature>
<feature type="modified residue" description="N6-(2-hydroxyisobutyryl)lysine; alternate" evidence="2">
    <location>
        <position position="15"/>
    </location>
</feature>
<feature type="modified residue" description="N6-(beta-hydroxybutyryl)lysine; alternate" evidence="3">
    <location>
        <position position="15"/>
    </location>
</feature>
<feature type="modified residue" description="N6-acetyllysine; alternate" evidence="4">
    <location>
        <position position="15"/>
    </location>
</feature>
<feature type="modified residue" description="N6-glutaryllysine; alternate" evidence="4">
    <location>
        <position position="15"/>
    </location>
</feature>
<feature type="modified residue" description="N6-lactoyllysine; alternate" evidence="5">
    <location>
        <position position="15"/>
    </location>
</feature>
<feature type="modified residue" description="N6-succinyllysine; alternate" evidence="4">
    <location>
        <position position="15"/>
    </location>
</feature>
<feature type="modified residue" description="Asymmetric dimethylarginine; by CARM1; alternate" evidence="4">
    <location>
        <position position="18"/>
    </location>
</feature>
<feature type="modified residue" description="Citrulline; alternate" evidence="4">
    <location>
        <position position="18"/>
    </location>
</feature>
<feature type="modified residue" description="N6-(2-hydroxyisobutyryl)lysine; alternate" evidence="2">
    <location>
        <position position="19"/>
    </location>
</feature>
<feature type="modified residue" description="N6-(beta-hydroxybutyryl)lysine; alternate" evidence="3">
    <location>
        <position position="19"/>
    </location>
</feature>
<feature type="modified residue" description="N6-acetyllysine; alternate" evidence="4">
    <location>
        <position position="19"/>
    </location>
</feature>
<feature type="modified residue" description="N6-butyryllysine; alternate" evidence="3">
    <location>
        <position position="19"/>
    </location>
</feature>
<feature type="modified residue" description="N6-crotonyllysine; alternate" evidence="4">
    <location>
        <position position="19"/>
    </location>
</feature>
<feature type="modified residue" description="N6-glutaryllysine; alternate" evidence="4">
    <location>
        <position position="19"/>
    </location>
</feature>
<feature type="modified residue" description="N6-lactoyllysine; alternate" evidence="4">
    <location>
        <position position="19"/>
    </location>
</feature>
<feature type="modified residue" description="N6-methyllysine; alternate" evidence="4">
    <location>
        <position position="19"/>
    </location>
</feature>
<feature type="modified residue" description="N6-(2-hydroxyisobutyryl)lysine; alternate" evidence="2">
    <location>
        <position position="24"/>
    </location>
</feature>
<feature type="modified residue" description="N6-(beta-hydroxybutyryl)lysine; alternate" evidence="3">
    <location>
        <position position="24"/>
    </location>
</feature>
<feature type="modified residue" description="N6-acetyllysine; alternate" evidence="4">
    <location>
        <position position="24"/>
    </location>
</feature>
<feature type="modified residue" description="N6-butyryllysine; alternate" evidence="3">
    <location>
        <position position="24"/>
    </location>
</feature>
<feature type="modified residue" description="N6-crotonyllysine; alternate" evidence="4">
    <location>
        <position position="24"/>
    </location>
</feature>
<feature type="modified residue" description="N6-glutaryllysine; alternate" evidence="4">
    <location>
        <position position="24"/>
    </location>
</feature>
<feature type="modified residue" description="N6-lactoyllysine; alternate" evidence="4">
    <location>
        <position position="24"/>
    </location>
</feature>
<feature type="modified residue" description="N6-methyllysine; alternate" evidence="4">
    <location>
        <position position="24"/>
    </location>
</feature>
<feature type="modified residue" description="Citrulline" evidence="4">
    <location>
        <position position="27"/>
    </location>
</feature>
<feature type="modified residue" description="N6,N6,N6-trimethyllysine; alternate" evidence="4">
    <location>
        <position position="28"/>
    </location>
</feature>
<feature type="modified residue" description="N6,N6-dimethyllysine; alternate" evidence="4">
    <location>
        <position position="28"/>
    </location>
</feature>
<feature type="modified residue" description="N6-(2-hydroxyisobutyryl)lysine; alternate" evidence="2">
    <location>
        <position position="28"/>
    </location>
</feature>
<feature type="modified residue" description="N6-acetyllysine; alternate" evidence="4">
    <location>
        <position position="28"/>
    </location>
</feature>
<feature type="modified residue" description="N6-crotonyllysine; alternate" evidence="4">
    <location>
        <position position="28"/>
    </location>
</feature>
<feature type="modified residue" description="N6-glutaryllysine; alternate" evidence="4">
    <location>
        <position position="28"/>
    </location>
</feature>
<feature type="modified residue" description="N6-lactoyllysine; alternate" evidence="4">
    <location>
        <position position="28"/>
    </location>
</feature>
<feature type="modified residue" description="N6-methyllysine; alternate" evidence="4">
    <location>
        <position position="28"/>
    </location>
</feature>
<feature type="modified residue" description="ADP-ribosylserine; alternate" evidence="2">
    <location>
        <position position="29"/>
    </location>
</feature>
<feature type="modified residue" description="Phosphoserine; alternate; by AURKB, AURKC and RPS6KA5" evidence="7">
    <location>
        <position position="29"/>
    </location>
</feature>
<feature type="modified residue" description="Phosphoserine" evidence="4">
    <location>
        <position position="32"/>
    </location>
</feature>
<feature type="modified residue" description="N6,N6,N6-trimethyllysine; alternate" evidence="4">
    <location>
        <position position="37"/>
    </location>
</feature>
<feature type="modified residue" description="N6,N6-dimethyllysine; alternate" evidence="4">
    <location>
        <position position="37"/>
    </location>
</feature>
<feature type="modified residue" description="N6-(2-hydroxyisobutyryl)lysine; alternate" evidence="2">
    <location>
        <position position="37"/>
    </location>
</feature>
<feature type="modified residue" description="N6-acetyllysine; alternate" evidence="4">
    <location>
        <position position="37"/>
    </location>
</feature>
<feature type="modified residue" description="N6-methyllysine; alternate" evidence="4">
    <location>
        <position position="37"/>
    </location>
</feature>
<feature type="modified residue" description="N6-methyllysine" evidence="2">
    <location>
        <position position="38"/>
    </location>
</feature>
<feature type="modified residue" description="Phosphotyrosine" evidence="4">
    <location>
        <position position="42"/>
    </location>
</feature>
<feature type="modified residue" description="N6,N6,N6-trimethyllysine; alternate" evidence="4">
    <location>
        <position position="57"/>
    </location>
</feature>
<feature type="modified residue" description="N6-(2-hydroxyisobutyryl)lysine; alternate" evidence="2">
    <location>
        <position position="57"/>
    </location>
</feature>
<feature type="modified residue" description="N6-(beta-hydroxybutyryl)lysine; alternate" evidence="3">
    <location>
        <position position="57"/>
    </location>
</feature>
<feature type="modified residue" description="N6-acetyllysine; alternate" evidence="4">
    <location>
        <position position="57"/>
    </location>
</feature>
<feature type="modified residue" description="N6-crotonyllysine; alternate" evidence="4">
    <location>
        <position position="57"/>
    </location>
</feature>
<feature type="modified residue" description="N6-glutaryllysine; alternate" evidence="4">
    <location>
        <position position="57"/>
    </location>
</feature>
<feature type="modified residue" description="N6-lactoyllysine; alternate" evidence="5">
    <location>
        <position position="57"/>
    </location>
</feature>
<feature type="modified residue" description="N6-methyllysine; by EHMT2; alternate" evidence="4">
    <location>
        <position position="57"/>
    </location>
</feature>
<feature type="modified residue" description="N6-succinyllysine; alternate" evidence="4">
    <location>
        <position position="57"/>
    </location>
</feature>
<feature type="modified residue" description="Phosphoserine" evidence="4">
    <location>
        <position position="58"/>
    </location>
</feature>
<feature type="modified residue" description="N6-(2-hydroxyisobutyryl)lysine; alternate" evidence="2">
    <location>
        <position position="65"/>
    </location>
</feature>
<feature type="modified residue" description="N6-methyllysine; alternate" evidence="4">
    <location>
        <position position="65"/>
    </location>
</feature>
<feature type="modified residue" description="N6,N6,N6-trimethyllysine; alternate" evidence="5">
    <location>
        <position position="80"/>
    </location>
</feature>
<feature type="modified residue" description="N6,N6-dimethyllysine; alternate" evidence="4">
    <location>
        <position position="80"/>
    </location>
</feature>
<feature type="modified residue" description="N6-(2-hydroxyisobutyryl)lysine; alternate" evidence="2">
    <location>
        <position position="80"/>
    </location>
</feature>
<feature type="modified residue" description="N6-acetyllysine; alternate" evidence="4">
    <location>
        <position position="80"/>
    </location>
</feature>
<feature type="modified residue" description="N6-glutaryllysine; alternate" evidence="4">
    <location>
        <position position="80"/>
    </location>
</feature>
<feature type="modified residue" description="N6-lactoyllysine; alternate" evidence="4">
    <location>
        <position position="80"/>
    </location>
</feature>
<feature type="modified residue" description="N6-methyllysine; alternate" evidence="4">
    <location>
        <position position="80"/>
    </location>
</feature>
<feature type="modified residue" description="N6-succinyllysine; alternate" evidence="4">
    <location>
        <position position="80"/>
    </location>
</feature>
<feature type="modified residue" description="Phosphothreonine" evidence="4">
    <location>
        <position position="81"/>
    </location>
</feature>
<feature type="modified residue" description="Phosphoserine" evidence="4">
    <location>
        <position position="87"/>
    </location>
</feature>
<feature type="modified residue" description="Phosphothreonine" evidence="8">
    <location>
        <position position="108"/>
    </location>
</feature>
<feature type="modified residue" description="N6-acetyllysine; alternate" evidence="4">
    <location>
        <position position="116"/>
    </location>
</feature>
<feature type="modified residue" description="N6-glutaryllysine; alternate" evidence="4">
    <location>
        <position position="116"/>
    </location>
</feature>
<feature type="modified residue" description="N6-(2-hydroxyisobutyryl)lysine; alternate" evidence="2">
    <location>
        <position position="123"/>
    </location>
</feature>
<feature type="modified residue" description="N6-acetyllysine; alternate" evidence="4">
    <location>
        <position position="123"/>
    </location>
</feature>
<feature type="modified residue" description="N6-glutaryllysine; alternate" evidence="4">
    <location>
        <position position="123"/>
    </location>
</feature>
<feature type="modified residue" description="N6-methyllysine; alternate" evidence="4">
    <location>
        <position position="123"/>
    </location>
</feature>
<feature type="modified residue" description="N6-succinyllysine; alternate" evidence="4">
    <location>
        <position position="123"/>
    </location>
</feature>
<feature type="lipid moiety-binding region" description="N6-decanoyllysine" evidence="4">
    <location>
        <position position="19"/>
    </location>
</feature>
<name>H33_RABIT</name>
<organism>
    <name type="scientific">Oryctolagus cuniculus</name>
    <name type="common">Rabbit</name>
    <dbReference type="NCBI Taxonomy" id="9986"/>
    <lineage>
        <taxon>Eukaryota</taxon>
        <taxon>Metazoa</taxon>
        <taxon>Chordata</taxon>
        <taxon>Craniata</taxon>
        <taxon>Vertebrata</taxon>
        <taxon>Euteleostomi</taxon>
        <taxon>Mammalia</taxon>
        <taxon>Eutheria</taxon>
        <taxon>Euarchontoglires</taxon>
        <taxon>Glires</taxon>
        <taxon>Lagomorpha</taxon>
        <taxon>Leporidae</taxon>
        <taxon>Oryctolagus</taxon>
    </lineage>
</organism>
<gene>
    <name evidence="4" type="primary">H3-3A</name>
    <name type="synonym">H3F3A</name>
</gene>
<proteinExistence type="evidence at transcript level"/>
<sequence length="136" mass="15328">MARTKQTARKSTGGKAPRKQLATKAARKSAPSTGGVKKPHRYRPGTVALREIRRYQKSTELLIRKLPFQRLVREIAQDFKTDLRFQSAAIGALQEASEAYLVGLFEDTNLCAIHAKRVTIMPKDIQLARRIRGERA</sequence>
<accession>P84246</accession>
<accession>P06351</accession>
<accession>P33155</accession>
<accession>Q9V3W4</accession>
<keyword id="KW-0007">Acetylation</keyword>
<keyword id="KW-0013">ADP-ribosylation</keyword>
<keyword id="KW-0158">Chromosome</keyword>
<keyword id="KW-0164">Citrullination</keyword>
<keyword id="KW-0238">DNA-binding</keyword>
<keyword id="KW-0379">Hydroxylation</keyword>
<keyword id="KW-0449">Lipoprotein</keyword>
<keyword id="KW-0488">Methylation</keyword>
<keyword id="KW-0544">Nucleosome core</keyword>
<keyword id="KW-0539">Nucleus</keyword>
<keyword id="KW-0597">Phosphoprotein</keyword>
<keyword id="KW-1185">Reference proteome</keyword>
<keyword id="KW-0832">Ubl conjugation</keyword>
<protein>
    <recommendedName>
        <fullName>Histone H3.3</fullName>
    </recommendedName>
</protein>
<dbReference type="EMBL" id="X51897">
    <property type="protein sequence ID" value="CAA36179.1"/>
    <property type="molecule type" value="mRNA"/>
</dbReference>
<dbReference type="PIR" id="S10168">
    <property type="entry name" value="S10168"/>
</dbReference>
<dbReference type="RefSeq" id="NP_001164583.1">
    <property type="nucleotide sequence ID" value="NM_001171112.1"/>
</dbReference>
<dbReference type="RefSeq" id="XP_002722981.1">
    <property type="nucleotide sequence ID" value="XM_002722935.3"/>
</dbReference>
<dbReference type="RefSeq" id="XP_008266274.1">
    <property type="nucleotide sequence ID" value="XM_008268052.4"/>
</dbReference>
<dbReference type="RefSeq" id="XP_017203252.1">
    <property type="nucleotide sequence ID" value="XM_017347763.1"/>
</dbReference>
<dbReference type="SMR" id="P84246"/>
<dbReference type="FunCoup" id="P84246">
    <property type="interactions" value="2145"/>
</dbReference>
<dbReference type="STRING" id="9986.ENSOCUP00000018693"/>
<dbReference type="PaxDb" id="9986-ENSOCUP00000015809"/>
<dbReference type="Ensembl" id="ENSOCUT00000042311.1">
    <property type="protein sequence ID" value="ENSOCUP00000028168.1"/>
    <property type="gene ID" value="ENSOCUG00000024644.2"/>
</dbReference>
<dbReference type="Ensembl" id="ENSOCUT00000053846.1">
    <property type="protein sequence ID" value="ENSOCUP00000035087.1"/>
    <property type="gene ID" value="ENSOCUG00000024644.2"/>
</dbReference>
<dbReference type="Ensembl" id="ENSOCUT00000062723.1">
    <property type="protein sequence ID" value="ENSOCUP00000039943.1"/>
    <property type="gene ID" value="ENSOCUG00000024644.2"/>
</dbReference>
<dbReference type="GeneID" id="100328923"/>
<dbReference type="KEGG" id="ocu:100328923"/>
<dbReference type="KEGG" id="ocu:100341225"/>
<dbReference type="CTD" id="3020"/>
<dbReference type="eggNOG" id="KOG1745">
    <property type="taxonomic scope" value="Eukaryota"/>
</dbReference>
<dbReference type="GeneTree" id="ENSGT01130000278271"/>
<dbReference type="HOGENOM" id="CLU_078295_4_0_1"/>
<dbReference type="InParanoid" id="P84246"/>
<dbReference type="OMA" id="HIFAEMA"/>
<dbReference type="OrthoDB" id="9587580at2759"/>
<dbReference type="TreeFam" id="TF314241"/>
<dbReference type="Proteomes" id="UP000001811">
    <property type="component" value="Chromosome 16"/>
</dbReference>
<dbReference type="Bgee" id="ENSOCUG00000024644">
    <property type="expression patterns" value="Expressed in embryo and 15 other cell types or tissues"/>
</dbReference>
<dbReference type="GO" id="GO:0000786">
    <property type="term" value="C:nucleosome"/>
    <property type="evidence" value="ECO:0007669"/>
    <property type="project" value="UniProtKB-KW"/>
</dbReference>
<dbReference type="GO" id="GO:0005634">
    <property type="term" value="C:nucleus"/>
    <property type="evidence" value="ECO:0007669"/>
    <property type="project" value="UniProtKB-SubCell"/>
</dbReference>
<dbReference type="GO" id="GO:0003677">
    <property type="term" value="F:DNA binding"/>
    <property type="evidence" value="ECO:0007669"/>
    <property type="project" value="UniProtKB-KW"/>
</dbReference>
<dbReference type="GO" id="GO:0046982">
    <property type="term" value="F:protein heterodimerization activity"/>
    <property type="evidence" value="ECO:0007669"/>
    <property type="project" value="InterPro"/>
</dbReference>
<dbReference type="GO" id="GO:0030527">
    <property type="term" value="F:structural constituent of chromatin"/>
    <property type="evidence" value="ECO:0007669"/>
    <property type="project" value="InterPro"/>
</dbReference>
<dbReference type="CDD" id="cd22911">
    <property type="entry name" value="HFD_H3"/>
    <property type="match status" value="1"/>
</dbReference>
<dbReference type="FunFam" id="1.10.20.10:FF:000078">
    <property type="entry name" value="Histone H3"/>
    <property type="match status" value="1"/>
</dbReference>
<dbReference type="FunFam" id="1.10.20.10:FF:000044">
    <property type="entry name" value="Histone H3.3"/>
    <property type="match status" value="1"/>
</dbReference>
<dbReference type="Gene3D" id="1.10.20.10">
    <property type="entry name" value="Histone, subunit A"/>
    <property type="match status" value="1"/>
</dbReference>
<dbReference type="InterPro" id="IPR009072">
    <property type="entry name" value="Histone-fold"/>
</dbReference>
<dbReference type="InterPro" id="IPR007125">
    <property type="entry name" value="Histone_H2A/H2B/H3"/>
</dbReference>
<dbReference type="InterPro" id="IPR000164">
    <property type="entry name" value="Histone_H3/CENP-A"/>
</dbReference>
<dbReference type="PANTHER" id="PTHR11426">
    <property type="entry name" value="HISTONE H3"/>
    <property type="match status" value="1"/>
</dbReference>
<dbReference type="Pfam" id="PF00125">
    <property type="entry name" value="Histone"/>
    <property type="match status" value="1"/>
</dbReference>
<dbReference type="PRINTS" id="PR00622">
    <property type="entry name" value="HISTONEH3"/>
</dbReference>
<dbReference type="SMART" id="SM00428">
    <property type="entry name" value="H3"/>
    <property type="match status" value="1"/>
</dbReference>
<dbReference type="SUPFAM" id="SSF47113">
    <property type="entry name" value="Histone-fold"/>
    <property type="match status" value="1"/>
</dbReference>
<dbReference type="PROSITE" id="PS00322">
    <property type="entry name" value="HISTONE_H3_1"/>
    <property type="match status" value="1"/>
</dbReference>
<dbReference type="PROSITE" id="PS00959">
    <property type="entry name" value="HISTONE_H3_2"/>
    <property type="match status" value="1"/>
</dbReference>
<reference key="1">
    <citation type="journal article" date="1990" name="Nucleic Acids Res.">
        <title>Extreme sequence conservation characterizes the rabbit H3.3A histone cDNA.</title>
        <authorList>
            <person name="Chalmers M."/>
            <person name="Wells D."/>
        </authorList>
    </citation>
    <scope>NUCLEOTIDE SEQUENCE [MRNA]</scope>
</reference>
<comment type="function">
    <text evidence="4">Variant histone H3 which replaces conventional H3 in a wide range of nucleosomes in active genes. Constitutes the predominant form of histone H3 in non-dividing cells and is incorporated into chromatin independently of DNA synthesis. Deposited at sites of nucleosomal displacement throughout transcribed genes, suggesting that it represents an epigenetic imprint of transcriptionally active chromatin. Nucleosomes wrap and compact DNA into chromatin, limiting DNA accessibility to the cellular machineries which require DNA as a template. Histones thereby play a central role in transcription regulation, DNA repair, DNA replication and chromosomal stability. DNA accessibility is regulated via a complex set of post-translational modifications of histones, also called histone code, and nucleosome remodeling.</text>
</comment>
<comment type="subunit">
    <text evidence="4">The nucleosome is a histone octamer containing two molecules each of H2A, H2B, H3 and H4 assembled in one H3-H4 heterotetramer and two H2A-H2B heterodimers. The octamer wraps approximately 147 bp of DNA. Interacts with HIRA, a chaperone required for its incorporation into nucleosomes. Interacts with ZMYND11; when trimethylated at 'Lys-36' (H3.3K36me3). Found in a co-chaperone complex with DNJC9, MCM2 and histone H3.3-H4 dimers (By similarity). Within the complex, interacts with DNJC9 (via C-terminus); the interaction is direct (By similarity). Interacts with ASF1A, MCM2, NASP and SPT2 (By similarity). Interacts with DAXX; the interaction is direct (By similarity). Interacts with NASP; NASP is a histone chaperone that stabilizes and maintains a soluble pool of Histone H3-H4 dimers (By similarity).</text>
</comment>
<comment type="subcellular location">
    <subcellularLocation>
        <location evidence="1">Nucleus</location>
    </subcellularLocation>
    <subcellularLocation>
        <location evidence="1">Chromosome</location>
    </subcellularLocation>
</comment>
<comment type="developmental stage">
    <text>Expressed throughout the cell cycle independently of DNA synthesis.</text>
</comment>
<comment type="domain">
    <text evidence="4">Specific interaction of trimethylated form at 'Lys-36' (H3.3K36me3) with ZMYND11 is mediated by the encapsulation of Ser-32 residue with a composite pocket formed by the tandem bromo-PWWP domains (By similarity). Interacts with ZMYND11; when trimethylated at 'Lys-36' (H3.3K36me3).</text>
</comment>
<comment type="PTM">
    <text evidence="4">Acetylation is generally linked to gene activation. Acetylation on Lys-10 (H3K9ac) impairs methylation at Arg-9 (H3R8me2s). Acetylation on Lys-19 (H3K18ac) and Lys-24 (H3K24ac) favors methylation at Arg-18 (H3R17me). Acetylation at Lys-123 (H3K122ac) by EP300/p300 plays a central role in chromatin structure: localizes at the surface of the histone octamer and stimulates transcription, possibly by promoting nucleosome instability.</text>
</comment>
<comment type="PTM">
    <text evidence="4">Citrullination at Arg-9 (H3R8ci) and/or Arg-18 (H3R17ci) by PADI4 impairs methylation and represses transcription.</text>
</comment>
<comment type="PTM">
    <text evidence="4">Asymmetric dimethylation at Arg-18 (H3R17me2a) by CARM1 is linked to gene activation. Symmetric dimethylation at Arg-9 (H3R8me2s) by PRMT5 is linked to gene repression. Asymmetric dimethylation at Arg-3 (H3R2me2a) by PRMT6 is linked to gene repression and is mutually exclusive with H3 Lys-5 methylation (H3K4me2 and H3K4me3). H3R2me2a is present at the 3' of genes regardless of their transcription state and is enriched on inactive promoters, while it is absent on active promoters.</text>
</comment>
<comment type="PTM">
    <text evidence="4">Specifically enriched in modifications associated with active chromatin such as methylation at Lys-5 (H3K4me), Lys-37 and Lys-80. Methylation at Lys-5 (H3K4me) facilitates subsequent acetylation of H3 and H4. Methylation at Lys-80 (H3K79me) is associated with DNA double-strand break (DSB) responses and is a specific target for TP53BP1. Methylation at Lys-10 (H3K9me) and Lys-28 (H3K27me), which are linked to gene repression, are underrepresented. Methylation at Lys-10 (H3K9me) is a specific target for HP1 proteins (CBX1, CBX3 and CBX5) and prevents subsequent phosphorylation at Ser-11 (H3S10ph) and acetylation of H3 and H4. Methylation at Lys-5 (H3K4me) and Lys-80 (H3K79me) require preliminary monoubiquitination of H2B at 'Lys-120'. Methylation at Lys-10 (H3K9me) and Lys-28 (H3K27me) are enriched in inactive X chromosome chromatin. Monomethylation at Lys-57 (H3K56me1) by EHMT2/G9A in G1 phase promotes interaction with PCNA and is required for DNA replication.</text>
</comment>
<comment type="PTM">
    <text evidence="4">Phosphorylated at Thr-4 (H3T3ph) by VRK1 (By similarity). Phosphorylated at Thr-4 (H3T3ph) by HASPIN during prophase and dephosphorylated during anaphase. Phosphorylation at Ser-11 (H3S10ph) by AURKB is crucial for chromosome condensation and cell-cycle progression during mitosis and meiosis. In addition phosphorylation at Ser-11 (H3S10ph) by RPS6KA4 and RPS6KA5 is important during interphase because it enables the transcription of genes following external stimulation, like mitogens, stress, growth factors or UV irradiation and result in the activation of genes, such as c-fos and c-jun. Phosphorylation at Ser-11 (H3S10ph), which is linked to gene activation, prevents methylation at Lys-10 (H3K9me) but facilitates acetylation of H3 and H4. Phosphorylation at Ser-11 (H3S10ph) by AURKB mediates the dissociation of HP1 proteins (CBX1, CBX3 and CBX5) from heterochromatin. Phosphorylation at Ser-11 (H3S10ph) is also an essential regulatory mechanism for neoplastic cell transformation. Phosphorylated at Ser-29 (H3S28ph) by MAP3K20 isoform 1, RPS6KA5 or AURKB during mitosis or upon ultraviolet B irradiation. Phosphorylation at Thr-7 (H3T6ph) by PRKCB is a specific tag for epigenetic transcriptional activation that prevents demethylation of Lys-5 (H3K4me) by LSD1/KDM1A. At centromeres, specifically phosphorylated at Thr-12 (H3T11ph) from prophase to early anaphase, by DAPK3 and PKN1. Phosphorylation at Thr-12 (H3T11ph) by PKN1 or isoform M2 of PKM (PKM2) is a specific tag for epigenetic transcriptional activation that promotes demethylation of Lys-10 (H3K9me) by KDM4C/JMJD2C. Phosphorylation at Tyr-42 (H3Y41ph) by JAK2 promotes exclusion of CBX5 (HP1 alpha) from chromatin. Phosphorylation on Ser-32 (H3S31ph) is specific to regions bordering centromeres in metaphase chromosomes.</text>
</comment>
<comment type="PTM">
    <text evidence="6">Ubiquitinated. Monoubiquitinated by RAG1 in lymphoid cells, monoubiquitination is required for V(D)J recombination (By similarity).</text>
</comment>
<comment type="PTM">
    <text evidence="4">Lysine deamination at Lys-5 (H3K4all) to form allysine is mediated by LOXL2. Allysine formation by LOXL2 only takes place on H3K4me3 and results in gene repression.</text>
</comment>
<comment type="PTM">
    <text evidence="4">Crotonylation (Kcr) is specifically present in male germ cells and marks testis-specific genes in post-meiotic cells, including X-linked genes that escape sex chromosome inactivation in haploid cells. Crotonylation marks active promoters and enhancers and confers resistance to transcriptional repressors. It is also associated with post-meiotically activated genes on autosomes.</text>
</comment>
<comment type="PTM">
    <text evidence="3">Butyrylation of histones marks active promoters and competes with histone acetylation. It is present during late spermatogenesis.</text>
</comment>
<comment type="PTM">
    <text evidence="4">Succinylation at Lys-80 (H3K79succ) by KAT2A takes place with a maximum frequency around the transcription start sites of genes. It gives a specific tag for epigenetic transcription activation. Desuccinylation at Lys-123 (H3K122succ) by SIRT7 in response to DNA damage promotes chromatin condensation and double-strand breaks (DSBs) repair.</text>
</comment>
<comment type="PTM">
    <text evidence="2">Serine ADP-ribosylation by PARP1 or PARP2 constitutes the primary form of ADP-ribosylation of proteins in response to DNA damage. Serine ADP-ribosylation at Ser-11 (H3S10ADPr) promotes recruitment of CHD1L. H3S10ADPr is mutually exclusive with phosphorylation at Ser-11 (H3S10ph) and impairs acetylation at Lys-10 (H3K9ac).</text>
</comment>
<comment type="PTM">
    <text evidence="4">Serotonylated by TGM2 at Gln-6 (H3Q5ser) during serotonergic neuron differentiation (By similarity). H3Q5ser is associated with trimethylation of Lys-5 (H3K4me3) and enhances general transcription factor IID (TFIID) complex-binding to H3K4me3, thereby facilitating transcription (By similarity).</text>
</comment>
<comment type="PTM">
    <text evidence="4 6">Dopaminylated by TGM2 at Gln-6 (H3Q5dop) in ventral tegmental area (VTA) neurons (By similarity). H3Q5dop mediates neurotransmission-independent role of nuclear dopamine by regulating relapse-related transcriptional plasticity in the reward system (By similarity).</text>
</comment>
<comment type="PTM">
    <text evidence="4">Lactylated in macrophages by EP300/P300 by using lactoyl-CoA directly derived from endogenous or exogenous lactate, leading to stimulates gene transcription.</text>
</comment>
<comment type="similarity">
    <text evidence="10">Belongs to the histone H3 family.</text>
</comment>